<name>Y6602_BACAN</name>
<gene>
    <name type="ordered locus">pXO2-74</name>
    <name type="ordered locus">BXB0102</name>
    <name type="ordered locus">GBAA_pXO2_0102</name>
</gene>
<geneLocation type="plasmid">
    <name>pXO2</name>
</geneLocation>
<feature type="chain" id="PRO_0000216862" description="Uncharacterized protein pXO2-74/BXB0102/GBAA_pXO2_0102">
    <location>
        <begin position="1"/>
        <end position="145"/>
    </location>
</feature>
<keyword id="KW-0614">Plasmid</keyword>
<keyword id="KW-1185">Reference proteome</keyword>
<reference key="1">
    <citation type="journal article" date="1999" name="J. Appl. Microbiol.">
        <title>Sequence, assembly and analysis of pXO1 and pXO2.</title>
        <authorList>
            <person name="Okinaka R.T."/>
            <person name="Cloud K."/>
            <person name="Hampton O."/>
            <person name="Hoffmaster A."/>
            <person name="Hill K.K."/>
            <person name="Keim P."/>
            <person name="Koehler T."/>
            <person name="Lamke G."/>
            <person name="Kumano S."/>
            <person name="Manter D."/>
            <person name="Martinez Y."/>
            <person name="Ricke D."/>
            <person name="Svensson R."/>
            <person name="Jackson P.J."/>
        </authorList>
    </citation>
    <scope>NUCLEOTIDE SEQUENCE [GENOMIC DNA]</scope>
    <source>
        <strain>Pasteur</strain>
    </source>
</reference>
<reference key="2">
    <citation type="journal article" date="2002" name="Science">
        <title>Comparative genome sequencing for discovery of novel polymorphisms in Bacillus anthracis.</title>
        <authorList>
            <person name="Read T.D."/>
            <person name="Salzberg S.L."/>
            <person name="Pop M."/>
            <person name="Shumway M.F."/>
            <person name="Umayam L."/>
            <person name="Jiang L."/>
            <person name="Holtzapple E."/>
            <person name="Busch J.D."/>
            <person name="Smith K.L."/>
            <person name="Schupp J.M."/>
            <person name="Solomon D."/>
            <person name="Keim P."/>
            <person name="Fraser C.M."/>
        </authorList>
    </citation>
    <scope>NUCLEOTIDE SEQUENCE [GENOMIC DNA]</scope>
    <source>
        <strain>Ames / isolate Florida / A2012</strain>
    </source>
</reference>
<reference key="3">
    <citation type="journal article" date="2009" name="J. Bacteriol.">
        <title>The complete genome sequence of Bacillus anthracis Ames 'Ancestor'.</title>
        <authorList>
            <person name="Ravel J."/>
            <person name="Jiang L."/>
            <person name="Stanley S.T."/>
            <person name="Wilson M.R."/>
            <person name="Decker R.S."/>
            <person name="Read T.D."/>
            <person name="Worsham P."/>
            <person name="Keim P.S."/>
            <person name="Salzberg S.L."/>
            <person name="Fraser-Liggett C.M."/>
            <person name="Rasko D.A."/>
        </authorList>
    </citation>
    <scope>NUCLEOTIDE SEQUENCE [LARGE SCALE GENOMIC DNA]</scope>
    <source>
        <strain>Ames ancestor</strain>
    </source>
</reference>
<organism>
    <name type="scientific">Bacillus anthracis</name>
    <dbReference type="NCBI Taxonomy" id="1392"/>
    <lineage>
        <taxon>Bacteria</taxon>
        <taxon>Bacillati</taxon>
        <taxon>Bacillota</taxon>
        <taxon>Bacilli</taxon>
        <taxon>Bacillales</taxon>
        <taxon>Bacillaceae</taxon>
        <taxon>Bacillus</taxon>
        <taxon>Bacillus cereus group</taxon>
    </lineage>
</organism>
<accession>Q9RMW0</accession>
<sequence>MSTEKLYSTADLAEELEMTKQGMNQAVKAGRIEAPAYYIGAYKGWTEEQVERIKGKIYEKEQEIKDIVRCIPYGLTPSGSEYLKHNPELALKYLEQAIKECENEMEKVINSDDKKYIGMDIFVGSCKERFEQIRDNLTRNSKNNS</sequence>
<dbReference type="EMBL" id="AF188935">
    <property type="protein sequence ID" value="AAF13679.1"/>
    <property type="molecule type" value="Genomic_DNA"/>
</dbReference>
<dbReference type="EMBL" id="AE011191">
    <property type="protein sequence ID" value="AAM26253.1"/>
    <property type="molecule type" value="Genomic_DNA"/>
</dbReference>
<dbReference type="EMBL" id="AE017335">
    <property type="protein sequence ID" value="AAT35515.1"/>
    <property type="molecule type" value="Genomic_DNA"/>
</dbReference>
<dbReference type="RefSeq" id="NP_053229.1">
    <property type="nucleotide sequence ID" value="NC_002146.1"/>
</dbReference>
<dbReference type="RefSeq" id="WP_000102587.1">
    <property type="nucleotide sequence ID" value="NZ_VTZL01000009.1"/>
</dbReference>
<dbReference type="SMR" id="Q9RMW0"/>
<dbReference type="GeneID" id="45025391"/>
<dbReference type="KEGG" id="banh:HYU01_29470"/>
<dbReference type="KEGG" id="bar:GBAA_pXO2_0102"/>
<dbReference type="HOGENOM" id="CLU_1782921_0_0_9"/>
<dbReference type="Proteomes" id="UP000000594">
    <property type="component" value="Plasmid pXO2"/>
</dbReference>
<protein>
    <recommendedName>
        <fullName>Uncharacterized protein pXO2-74/BXB0102/GBAA_pXO2_0102</fullName>
    </recommendedName>
</protein>
<proteinExistence type="predicted"/>